<proteinExistence type="evidence at protein level"/>
<name>TIPA_STRLI</name>
<evidence type="ECO:0000255" key="1">
    <source>
        <dbReference type="PROSITE-ProRule" id="PRU00254"/>
    </source>
</evidence>
<evidence type="ECO:0000305" key="2"/>
<evidence type="ECO:0007829" key="3">
    <source>
        <dbReference type="PDB" id="1NY9"/>
    </source>
</evidence>
<evidence type="ECO:0007829" key="4">
    <source>
        <dbReference type="PDB" id="2MBZ"/>
    </source>
</evidence>
<evidence type="ECO:0007829" key="5">
    <source>
        <dbReference type="PDB" id="2MC0"/>
    </source>
</evidence>
<evidence type="ECO:0007829" key="6">
    <source>
        <dbReference type="PDB" id="2VZ4"/>
    </source>
</evidence>
<gene>
    <name type="primary">tipA</name>
</gene>
<feature type="chain" id="PRO_0000013606" description="HTH-type transcriptional activator TipA">
    <location>
        <begin position="1"/>
        <end position="253"/>
    </location>
</feature>
<feature type="domain" description="HTH merR-type" evidence="1">
    <location>
        <begin position="1"/>
        <end position="71"/>
    </location>
</feature>
<feature type="DNA-binding region" description="H-T-H motif" evidence="1">
    <location>
        <begin position="5"/>
        <end position="24"/>
    </location>
</feature>
<feature type="splice variant" id="VSP_018752" description="In isoform Short." evidence="2">
    <location>
        <begin position="1"/>
        <end position="109"/>
    </location>
</feature>
<feature type="helix" evidence="6">
    <location>
        <begin position="5"/>
        <end position="12"/>
    </location>
</feature>
<feature type="helix" evidence="6">
    <location>
        <begin position="16"/>
        <end position="24"/>
    </location>
</feature>
<feature type="strand" evidence="6">
    <location>
        <begin position="31"/>
        <end position="33"/>
    </location>
</feature>
<feature type="strand" evidence="6">
    <location>
        <begin position="39"/>
        <end position="41"/>
    </location>
</feature>
<feature type="helix" evidence="6">
    <location>
        <begin position="43"/>
        <end position="57"/>
    </location>
</feature>
<feature type="helix" evidence="6">
    <location>
        <begin position="62"/>
        <end position="69"/>
    </location>
</feature>
<feature type="helix" evidence="6">
    <location>
        <begin position="79"/>
        <end position="105"/>
    </location>
</feature>
<feature type="helix" evidence="4">
    <location>
        <begin position="116"/>
        <end position="123"/>
    </location>
</feature>
<feature type="helix" evidence="4">
    <location>
        <begin position="129"/>
        <end position="131"/>
    </location>
</feature>
<feature type="helix" evidence="4">
    <location>
        <begin position="132"/>
        <end position="138"/>
    </location>
</feature>
<feature type="helix" evidence="4">
    <location>
        <begin position="144"/>
        <end position="152"/>
    </location>
</feature>
<feature type="helix" evidence="3">
    <location>
        <begin position="165"/>
        <end position="180"/>
    </location>
</feature>
<feature type="helix" evidence="3">
    <location>
        <begin position="187"/>
        <end position="203"/>
    </location>
</feature>
<feature type="helix" evidence="3">
    <location>
        <begin position="209"/>
        <end position="218"/>
    </location>
</feature>
<feature type="helix" evidence="3">
    <location>
        <begin position="223"/>
        <end position="229"/>
    </location>
</feature>
<feature type="helix" evidence="3">
    <location>
        <begin position="230"/>
        <end position="232"/>
    </location>
</feature>
<feature type="strand" evidence="5">
    <location>
        <begin position="233"/>
        <end position="235"/>
    </location>
</feature>
<feature type="helix" evidence="3">
    <location>
        <begin position="236"/>
        <end position="251"/>
    </location>
</feature>
<organism>
    <name type="scientific">Streptomyces lividans</name>
    <dbReference type="NCBI Taxonomy" id="1916"/>
    <lineage>
        <taxon>Bacteria</taxon>
        <taxon>Bacillati</taxon>
        <taxon>Actinomycetota</taxon>
        <taxon>Actinomycetes</taxon>
        <taxon>Kitasatosporales</taxon>
        <taxon>Streptomycetaceae</taxon>
        <taxon>Streptomyces</taxon>
    </lineage>
</organism>
<reference key="1">
    <citation type="journal article" date="1989" name="J. Bacteriol.">
        <title>Thiostrepton-induced gene expression in Streptomyces lividans.</title>
        <authorList>
            <person name="Murakami T."/>
            <person name="Holt T.G."/>
            <person name="Thompson C.J."/>
        </authorList>
    </citation>
    <scope>NUCLEOTIDE SEQUENCE [GENOMIC DNA]</scope>
</reference>
<reference key="2">
    <citation type="journal article" date="1993" name="EMBO J.">
        <title>Autogenous transcriptional activation of a thiostrepton-induced gene in Streptomyces lividans.</title>
        <authorList>
            <person name="Holmes D.J."/>
            <person name="Caso J.L."/>
            <person name="Thompson C.J."/>
        </authorList>
    </citation>
    <scope>NUCLEOTIDE SEQUENCE [GENOMIC DNA]</scope>
    <scope>PARTIAL PROTEIN SEQUENCE</scope>
    <scope>CHARACTERIZATION</scope>
</reference>
<protein>
    <recommendedName>
        <fullName>HTH-type transcriptional activator TipA</fullName>
    </recommendedName>
</protein>
<sequence>MSYSVGQVAGFAGVTVRTLHHYDDIGLLVPSERSHAGHRRYSDADLDRLQQILFYRELGFPLDEVAALLDDPAADPRAHLRRQHELLSARIGKLQKMAAAVEQAMEARSMGINLTPEEKFEVFGDFDPDQYEEEVRERWGNTDAYRQSKEKTASYTKEDWQRIQDEADELTRRFVALMDAGEPADSEGAMDAAEDHRQGIARNHYDCGYEMHTCLGEMYVSDERFTRNIDAAKPGLAAYMRDAILANAVRHTP</sequence>
<dbReference type="EMBL" id="S64314">
    <property type="protein sequence ID" value="AAB27737.1"/>
    <property type="molecule type" value="Genomic_DNA"/>
</dbReference>
<dbReference type="EMBL" id="M24524">
    <property type="protein sequence ID" value="AAC13653.1"/>
    <property type="status" value="ALT_INIT"/>
    <property type="molecule type" value="Genomic_DNA"/>
</dbReference>
<dbReference type="PIR" id="S35354">
    <property type="entry name" value="S35354"/>
</dbReference>
<dbReference type="PDB" id="1NY9">
    <property type="method" value="NMR"/>
    <property type="chains" value="A=111-253"/>
</dbReference>
<dbReference type="PDB" id="2MBZ">
    <property type="method" value="NMR"/>
    <property type="chains" value="A=110-253"/>
</dbReference>
<dbReference type="PDB" id="2MC0">
    <property type="method" value="NMR"/>
    <property type="chains" value="A=110-253"/>
</dbReference>
<dbReference type="PDB" id="2VZ4">
    <property type="method" value="X-ray"/>
    <property type="resolution" value="2.90 A"/>
    <property type="chains" value="A=2-109"/>
</dbReference>
<dbReference type="PDBsum" id="1NY9"/>
<dbReference type="PDBsum" id="2MBZ"/>
<dbReference type="PDBsum" id="2MC0"/>
<dbReference type="PDBsum" id="2VZ4"/>
<dbReference type="BMRB" id="P0A4T9"/>
<dbReference type="SMR" id="P0A4T9"/>
<dbReference type="EvolutionaryTrace" id="P0A4T9"/>
<dbReference type="GO" id="GO:0003677">
    <property type="term" value="F:DNA binding"/>
    <property type="evidence" value="ECO:0007669"/>
    <property type="project" value="UniProtKB-KW"/>
</dbReference>
<dbReference type="GO" id="GO:0003700">
    <property type="term" value="F:DNA-binding transcription factor activity"/>
    <property type="evidence" value="ECO:0007669"/>
    <property type="project" value="InterPro"/>
</dbReference>
<dbReference type="CDD" id="cd01106">
    <property type="entry name" value="HTH_TipAL-Mta"/>
    <property type="match status" value="1"/>
</dbReference>
<dbReference type="DisProt" id="DP00997"/>
<dbReference type="Gene3D" id="1.10.1660.10">
    <property type="match status" value="1"/>
</dbReference>
<dbReference type="Gene3D" id="1.10.490.50">
    <property type="entry name" value="Antibiotic binding domain of TipA-like multidrug resistance regulators"/>
    <property type="match status" value="1"/>
</dbReference>
<dbReference type="InterPro" id="IPR009061">
    <property type="entry name" value="DNA-bd_dom_put_sf"/>
</dbReference>
<dbReference type="InterPro" id="IPR000551">
    <property type="entry name" value="MerR-type_HTH_dom"/>
</dbReference>
<dbReference type="InterPro" id="IPR047057">
    <property type="entry name" value="MerR_fam"/>
</dbReference>
<dbReference type="InterPro" id="IPR036244">
    <property type="entry name" value="TipA-like_antibiotic-bd"/>
</dbReference>
<dbReference type="InterPro" id="IPR012925">
    <property type="entry name" value="TipAS_dom"/>
</dbReference>
<dbReference type="PANTHER" id="PTHR30204:SF90">
    <property type="entry name" value="HTH-TYPE TRANSCRIPTIONAL ACTIVATOR MTA"/>
    <property type="match status" value="1"/>
</dbReference>
<dbReference type="PANTHER" id="PTHR30204">
    <property type="entry name" value="REDOX-CYCLING DRUG-SENSING TRANSCRIPTIONAL ACTIVATOR SOXR"/>
    <property type="match status" value="1"/>
</dbReference>
<dbReference type="Pfam" id="PF13411">
    <property type="entry name" value="MerR_1"/>
    <property type="match status" value="1"/>
</dbReference>
<dbReference type="Pfam" id="PF07739">
    <property type="entry name" value="TipAS"/>
    <property type="match status" value="1"/>
</dbReference>
<dbReference type="PRINTS" id="PR00040">
    <property type="entry name" value="HTHMERR"/>
</dbReference>
<dbReference type="SMART" id="SM00422">
    <property type="entry name" value="HTH_MERR"/>
    <property type="match status" value="1"/>
</dbReference>
<dbReference type="SUPFAM" id="SSF89082">
    <property type="entry name" value="Antibiotic binding domain of TipA-like multidrug resistance regulators"/>
    <property type="match status" value="1"/>
</dbReference>
<dbReference type="SUPFAM" id="SSF46955">
    <property type="entry name" value="Putative DNA-binding domain"/>
    <property type="match status" value="1"/>
</dbReference>
<dbReference type="PROSITE" id="PS00552">
    <property type="entry name" value="HTH_MERR_1"/>
    <property type="match status" value="1"/>
</dbReference>
<dbReference type="PROSITE" id="PS50937">
    <property type="entry name" value="HTH_MERR_2"/>
    <property type="match status" value="1"/>
</dbReference>
<keyword id="KW-0002">3D-structure</keyword>
<keyword id="KW-0010">Activator</keyword>
<keyword id="KW-0024">Alternative initiation</keyword>
<keyword id="KW-0903">Direct protein sequencing</keyword>
<keyword id="KW-0238">DNA-binding</keyword>
<keyword id="KW-0804">Transcription</keyword>
<keyword id="KW-0805">Transcription regulation</keyword>
<accession>P0A4T9</accession>
<accession>P32184</accession>
<comment type="function">
    <text>Transcriptional activator. Is activated when bound to the antibiotic thiostrepton.</text>
</comment>
<comment type="subunit">
    <text evidence="2">Homodimer.</text>
</comment>
<comment type="alternative products">
    <event type="alternative initiation"/>
    <isoform>
        <id>P0A4T9-1</id>
        <name>Long</name>
        <name>TipA-L</name>
        <sequence type="displayed"/>
    </isoform>
    <isoform>
        <id>P0A4T9-2</id>
        <name>Short</name>
        <name>TipA-S</name>
        <sequence type="described" ref="VSP_018752"/>
    </isoform>
</comment>
<comment type="sequence caution" evidence="2">
    <conflict type="erroneous initiation">
        <sequence resource="EMBL-CDS" id="AAC13653"/>
    </conflict>
</comment>